<feature type="chain" id="PRO_1000146480" description="Small ribosomal subunit protein uS9">
    <location>
        <begin position="1"/>
        <end position="130"/>
    </location>
</feature>
<accession>B7VIY4</accession>
<evidence type="ECO:0000255" key="1">
    <source>
        <dbReference type="HAMAP-Rule" id="MF_00532"/>
    </source>
</evidence>
<evidence type="ECO:0000305" key="2"/>
<reference key="1">
    <citation type="submission" date="2009-02" db="EMBL/GenBank/DDBJ databases">
        <title>Vibrio splendidus str. LGP32 complete genome.</title>
        <authorList>
            <person name="Mazel D."/>
            <person name="Le Roux F."/>
        </authorList>
    </citation>
    <scope>NUCLEOTIDE SEQUENCE [LARGE SCALE GENOMIC DNA]</scope>
    <source>
        <strain>LGP32</strain>
    </source>
</reference>
<gene>
    <name evidence="1" type="primary">rpsI</name>
    <name type="ordered locus">VS_0430</name>
</gene>
<organism>
    <name type="scientific">Vibrio atlanticus (strain LGP32)</name>
    <name type="common">Vibrio splendidus (strain Mel32)</name>
    <dbReference type="NCBI Taxonomy" id="575788"/>
    <lineage>
        <taxon>Bacteria</taxon>
        <taxon>Pseudomonadati</taxon>
        <taxon>Pseudomonadota</taxon>
        <taxon>Gammaproteobacteria</taxon>
        <taxon>Vibrionales</taxon>
        <taxon>Vibrionaceae</taxon>
        <taxon>Vibrio</taxon>
    </lineage>
</organism>
<protein>
    <recommendedName>
        <fullName evidence="1">Small ribosomal subunit protein uS9</fullName>
    </recommendedName>
    <alternativeName>
        <fullName evidence="2">30S ribosomal protein S9</fullName>
    </alternativeName>
</protein>
<keyword id="KW-0687">Ribonucleoprotein</keyword>
<keyword id="KW-0689">Ribosomal protein</keyword>
<dbReference type="EMBL" id="FM954972">
    <property type="protein sequence ID" value="CAV17438.1"/>
    <property type="molecule type" value="Genomic_DNA"/>
</dbReference>
<dbReference type="SMR" id="B7VIY4"/>
<dbReference type="STRING" id="575788.VS_0430"/>
<dbReference type="KEGG" id="vsp:VS_0430"/>
<dbReference type="eggNOG" id="COG0103">
    <property type="taxonomic scope" value="Bacteria"/>
</dbReference>
<dbReference type="HOGENOM" id="CLU_046483_2_1_6"/>
<dbReference type="Proteomes" id="UP000009100">
    <property type="component" value="Chromosome 1"/>
</dbReference>
<dbReference type="GO" id="GO:0022627">
    <property type="term" value="C:cytosolic small ribosomal subunit"/>
    <property type="evidence" value="ECO:0007669"/>
    <property type="project" value="TreeGrafter"/>
</dbReference>
<dbReference type="GO" id="GO:0003723">
    <property type="term" value="F:RNA binding"/>
    <property type="evidence" value="ECO:0007669"/>
    <property type="project" value="TreeGrafter"/>
</dbReference>
<dbReference type="GO" id="GO:0003735">
    <property type="term" value="F:structural constituent of ribosome"/>
    <property type="evidence" value="ECO:0007669"/>
    <property type="project" value="InterPro"/>
</dbReference>
<dbReference type="GO" id="GO:0006412">
    <property type="term" value="P:translation"/>
    <property type="evidence" value="ECO:0007669"/>
    <property type="project" value="UniProtKB-UniRule"/>
</dbReference>
<dbReference type="FunFam" id="3.30.230.10:FF:000001">
    <property type="entry name" value="30S ribosomal protein S9"/>
    <property type="match status" value="1"/>
</dbReference>
<dbReference type="Gene3D" id="3.30.230.10">
    <property type="match status" value="1"/>
</dbReference>
<dbReference type="HAMAP" id="MF_00532_B">
    <property type="entry name" value="Ribosomal_uS9_B"/>
    <property type="match status" value="1"/>
</dbReference>
<dbReference type="InterPro" id="IPR020568">
    <property type="entry name" value="Ribosomal_Su5_D2-typ_SF"/>
</dbReference>
<dbReference type="InterPro" id="IPR000754">
    <property type="entry name" value="Ribosomal_uS9"/>
</dbReference>
<dbReference type="InterPro" id="IPR023035">
    <property type="entry name" value="Ribosomal_uS9_bac/plastid"/>
</dbReference>
<dbReference type="InterPro" id="IPR020574">
    <property type="entry name" value="Ribosomal_uS9_CS"/>
</dbReference>
<dbReference type="InterPro" id="IPR014721">
    <property type="entry name" value="Ribsml_uS5_D2-typ_fold_subgr"/>
</dbReference>
<dbReference type="NCBIfam" id="NF001099">
    <property type="entry name" value="PRK00132.1"/>
    <property type="match status" value="1"/>
</dbReference>
<dbReference type="PANTHER" id="PTHR21569">
    <property type="entry name" value="RIBOSOMAL PROTEIN S9"/>
    <property type="match status" value="1"/>
</dbReference>
<dbReference type="PANTHER" id="PTHR21569:SF1">
    <property type="entry name" value="SMALL RIBOSOMAL SUBUNIT PROTEIN US9M"/>
    <property type="match status" value="1"/>
</dbReference>
<dbReference type="Pfam" id="PF00380">
    <property type="entry name" value="Ribosomal_S9"/>
    <property type="match status" value="1"/>
</dbReference>
<dbReference type="SUPFAM" id="SSF54211">
    <property type="entry name" value="Ribosomal protein S5 domain 2-like"/>
    <property type="match status" value="1"/>
</dbReference>
<dbReference type="PROSITE" id="PS00360">
    <property type="entry name" value="RIBOSOMAL_S9"/>
    <property type="match status" value="1"/>
</dbReference>
<name>RS9_VIBA3</name>
<sequence length="130" mass="14572">MAENQYYGTGRRKSSAARVFIKPGSGEIVINKRSLDVYFGRPTSRMVVKQPLELVELTEKLDLYITVSGGGISGQAGAIRHGITRALMEYDETLRPALRAAGYVTRDARCVERKKVGLRKARRKPQFSKR</sequence>
<comment type="similarity">
    <text evidence="1">Belongs to the universal ribosomal protein uS9 family.</text>
</comment>
<proteinExistence type="inferred from homology"/>